<comment type="function">
    <text evidence="6">Implicated in the genesis of hemopoietic malignancies. It may play an important role in hemopoietic differentiation. Serves as a positive regulator of erythroid differentiation.</text>
</comment>
<comment type="subunit">
    <text evidence="5 6">Efficient DNA binding requires dimerization with another bHLH protein. Forms heterodimers with TCF3. Binds to the LIM domain containing protein LMO2 and to DRG1. Can assemble in a complex with LDB1 and LMO2. Component of a TAL-1 complex composed at least of CBFA2T3, LDB1, TAL1 and TCF3 (PubMed:9391090). Interacts with SBNO2; this interaction inhibits TAL1 occupancy of the DCSTAMP promoter, leading to the activation of the DCSTAMP promoter by the transcription factor MITF (PubMed:23980096).</text>
</comment>
<comment type="interaction">
    <interactant intactId="EBI-8006437">
        <id>P22091</id>
    </interactant>
    <interactant intactId="EBI-8006755">
        <id>O70374</id>
        <label>Cbfa2t2</label>
    </interactant>
    <organismsDiffer>false</organismsDiffer>
    <experiments>8</experiments>
</comment>
<comment type="interaction">
    <interactant intactId="EBI-8006437">
        <id>P22091</id>
    </interactant>
    <interactant intactId="EBI-8006703">
        <id>O54972</id>
        <label>Cbfa2t3</label>
    </interactant>
    <organismsDiffer>false</organismsDiffer>
    <experiments>11</experiments>
</comment>
<comment type="interaction">
    <interactant intactId="EBI-8006437">
        <id>P22091</id>
    </interactant>
    <interactant intactId="EBI-3903251">
        <id>P17679</id>
        <label>Gata1</label>
    </interactant>
    <organismsDiffer>false</organismsDiffer>
    <experiments>2</experiments>
</comment>
<comment type="interaction">
    <interactant intactId="EBI-8006437">
        <id>P22091</id>
    </interactant>
    <interactant intactId="EBI-301912">
        <id>O09106</id>
        <label>Hdac1</label>
    </interactant>
    <organismsDiffer>false</organismsDiffer>
    <experiments>3</experiments>
</comment>
<comment type="interaction">
    <interactant intactId="EBI-8006437">
        <id>P22091</id>
    </interactant>
    <interactant intactId="EBI-6272082">
        <id>P70662</id>
        <label>Ldb1</label>
    </interactant>
    <organismsDiffer>false</organismsDiffer>
    <experiments>4</experiments>
</comment>
<comment type="interaction">
    <interactant intactId="EBI-8006437">
        <id>P22091</id>
    </interactant>
    <interactant intactId="EBI-3903256">
        <id>P25801</id>
        <label>Lmo2</label>
    </interactant>
    <organismsDiffer>false</organismsDiffer>
    <experiments>2</experiments>
</comment>
<comment type="interaction">
    <interactant intactId="EBI-8006437">
        <id>P22091</id>
    </interactant>
    <interactant intactId="EBI-8006499">
        <id>Q61286</id>
        <label>Tcf12</label>
    </interactant>
    <organismsDiffer>false</organismsDiffer>
    <experiments>2</experiments>
</comment>
<comment type="interaction">
    <interactant intactId="EBI-8006437">
        <id>P22091</id>
    </interactant>
    <interactant intactId="EBI-81370">
        <id>P15806</id>
        <label>Tcf3</label>
    </interactant>
    <organismsDiffer>false</organismsDiffer>
    <experiments>4</experiments>
</comment>
<comment type="interaction">
    <interactant intactId="EBI-8006437">
        <id>P22091</id>
    </interactant>
    <interactant intactId="EBI-15599570">
        <id>O60341-1</id>
        <label>KDM1A</label>
    </interactant>
    <organismsDiffer>true</organismsDiffer>
    <experiments>2</experiments>
</comment>
<comment type="subcellular location">
    <subcellularLocation>
        <location evidence="2 6">Nucleus</location>
    </subcellularLocation>
</comment>
<comment type="tissue specificity">
    <text>Erythroid and myeloid cells.</text>
</comment>
<comment type="domain">
    <text>The helix-loop-helix domain is necessary and sufficient for the interaction with DRG1.</text>
</comment>
<comment type="PTM">
    <text evidence="4">Phosphorylated on serine residues. Phosphorylation of Ser-122 by MAPK is strongly stimulated by hypoxia.</text>
</comment>
<comment type="PTM">
    <text evidence="4">Ubiquitinated; subsequent to hypoxia-dependent phosphorylation of Ser-122, ubiquitination targets the protein for rapid degradation via the ubiquitin system. This process may be characteristic for microvascular endothelial cells, since it could not be observed in large vessel endothelial cells.</text>
</comment>
<proteinExistence type="evidence at protein level"/>
<name>TAL1_MOUSE</name>
<accession>P22091</accession>
<dbReference type="EMBL" id="M59764">
    <property type="protein sequence ID" value="AAA40097.1"/>
    <property type="molecule type" value="mRNA"/>
</dbReference>
<dbReference type="EMBL" id="U01530">
    <property type="protein sequence ID" value="AAA86937.1"/>
    <property type="molecule type" value="Genomic_DNA"/>
</dbReference>
<dbReference type="EMBL" id="BC063060">
    <property type="protein sequence ID" value="AAH63060.1"/>
    <property type="molecule type" value="mRNA"/>
</dbReference>
<dbReference type="CCDS" id="CCDS18486.1"/>
<dbReference type="PIR" id="A37864">
    <property type="entry name" value="A37864"/>
</dbReference>
<dbReference type="RefSeq" id="NP_001274317.1">
    <property type="nucleotide sequence ID" value="NM_001287388.2"/>
</dbReference>
<dbReference type="RefSeq" id="NP_001412708.1">
    <property type="nucleotide sequence ID" value="NM_001425779.1"/>
</dbReference>
<dbReference type="RefSeq" id="NP_001412709.1">
    <property type="nucleotide sequence ID" value="NM_001425780.1"/>
</dbReference>
<dbReference type="RefSeq" id="NP_001412710.1">
    <property type="nucleotide sequence ID" value="NM_001425781.1"/>
</dbReference>
<dbReference type="RefSeq" id="NP_001412711.1">
    <property type="nucleotide sequence ID" value="NM_001425782.1"/>
</dbReference>
<dbReference type="RefSeq" id="NP_001412712.1">
    <property type="nucleotide sequence ID" value="NM_001425783.1"/>
</dbReference>
<dbReference type="RefSeq" id="NP_001412713.1">
    <property type="nucleotide sequence ID" value="NM_001425784.1"/>
</dbReference>
<dbReference type="RefSeq" id="NP_001412714.1">
    <property type="nucleotide sequence ID" value="NM_001425785.1"/>
</dbReference>
<dbReference type="RefSeq" id="NP_001412715.1">
    <property type="nucleotide sequence ID" value="NM_001425786.1"/>
</dbReference>
<dbReference type="RefSeq" id="NP_001412716.1">
    <property type="nucleotide sequence ID" value="NM_001425787.1"/>
</dbReference>
<dbReference type="RefSeq" id="NP_001412717.1">
    <property type="nucleotide sequence ID" value="NM_001425788.1"/>
</dbReference>
<dbReference type="RefSeq" id="NP_035657.1">
    <property type="nucleotide sequence ID" value="NM_011527.4"/>
</dbReference>
<dbReference type="RefSeq" id="XP_006502973.1">
    <property type="nucleotide sequence ID" value="XM_006502910.3"/>
</dbReference>
<dbReference type="RefSeq" id="XP_006502975.1">
    <property type="nucleotide sequence ID" value="XM_006502912.3"/>
</dbReference>
<dbReference type="RefSeq" id="XP_006502976.1">
    <property type="nucleotide sequence ID" value="XM_006502913.3"/>
</dbReference>
<dbReference type="RefSeq" id="XP_006502977.1">
    <property type="nucleotide sequence ID" value="XM_006502914.3"/>
</dbReference>
<dbReference type="RefSeq" id="XP_006502978.1">
    <property type="nucleotide sequence ID" value="XM_006502915.3"/>
</dbReference>
<dbReference type="RefSeq" id="XP_006502979.1">
    <property type="nucleotide sequence ID" value="XM_006502916.2"/>
</dbReference>
<dbReference type="SMR" id="P22091"/>
<dbReference type="BioGRID" id="203962">
    <property type="interactions" value="12"/>
</dbReference>
<dbReference type="CORUM" id="P22091"/>
<dbReference type="DIP" id="DIP-42839N"/>
<dbReference type="FunCoup" id="P22091">
    <property type="interactions" value="544"/>
</dbReference>
<dbReference type="IntAct" id="P22091">
    <property type="interactions" value="22"/>
</dbReference>
<dbReference type="MINT" id="P22091"/>
<dbReference type="STRING" id="10090.ENSMUSP00000030489"/>
<dbReference type="iPTMnet" id="P22091"/>
<dbReference type="PhosphoSitePlus" id="P22091"/>
<dbReference type="PaxDb" id="10090-ENSMUSP00000125202"/>
<dbReference type="ProteomicsDB" id="263000"/>
<dbReference type="Antibodypedia" id="4499">
    <property type="antibodies" value="791 antibodies from 39 providers"/>
</dbReference>
<dbReference type="DNASU" id="21349"/>
<dbReference type="Ensembl" id="ENSMUST00000030489.9">
    <property type="protein sequence ID" value="ENSMUSP00000030489.3"/>
    <property type="gene ID" value="ENSMUSG00000028717.13"/>
</dbReference>
<dbReference type="Ensembl" id="ENSMUST00000161601.8">
    <property type="protein sequence ID" value="ENSMUSP00000125202.2"/>
    <property type="gene ID" value="ENSMUSG00000028717.13"/>
</dbReference>
<dbReference type="Ensembl" id="ENSMUST00000162489.2">
    <property type="protein sequence ID" value="ENSMUSP00000124983.2"/>
    <property type="gene ID" value="ENSMUSG00000028717.13"/>
</dbReference>
<dbReference type="GeneID" id="21349"/>
<dbReference type="KEGG" id="mmu:21349"/>
<dbReference type="UCSC" id="uc008uek.1">
    <property type="organism name" value="mouse"/>
</dbReference>
<dbReference type="AGR" id="MGI:98480"/>
<dbReference type="CTD" id="6886"/>
<dbReference type="MGI" id="MGI:98480">
    <property type="gene designation" value="Tal1"/>
</dbReference>
<dbReference type="VEuPathDB" id="HostDB:ENSMUSG00000028717"/>
<dbReference type="eggNOG" id="KOG4029">
    <property type="taxonomic scope" value="Eukaryota"/>
</dbReference>
<dbReference type="GeneTree" id="ENSGT00940000159889"/>
<dbReference type="HOGENOM" id="CLU_059203_0_0_1"/>
<dbReference type="InParanoid" id="P22091"/>
<dbReference type="OMA" id="MMERQPA"/>
<dbReference type="OrthoDB" id="10069510at2759"/>
<dbReference type="PhylomeDB" id="P22091"/>
<dbReference type="TreeFam" id="TF315153"/>
<dbReference type="Reactome" id="R-MMU-8939236">
    <property type="pathway name" value="RUNX1 regulates transcription of genes involved in differentiation of HSCs"/>
</dbReference>
<dbReference type="BioGRID-ORCS" id="21349">
    <property type="hits" value="5 hits in 79 CRISPR screens"/>
</dbReference>
<dbReference type="PRO" id="PR:P22091"/>
<dbReference type="Proteomes" id="UP000000589">
    <property type="component" value="Chromosome 4"/>
</dbReference>
<dbReference type="RNAct" id="P22091">
    <property type="molecule type" value="protein"/>
</dbReference>
<dbReference type="Bgee" id="ENSMUSG00000028717">
    <property type="expression patterns" value="Expressed in fetal liver hematopoietic progenitor cell and 160 other cell types or tissues"/>
</dbReference>
<dbReference type="ExpressionAtlas" id="P22091">
    <property type="expression patterns" value="baseline and differential"/>
</dbReference>
<dbReference type="GO" id="GO:0000785">
    <property type="term" value="C:chromatin"/>
    <property type="evidence" value="ECO:0007669"/>
    <property type="project" value="Ensembl"/>
</dbReference>
<dbReference type="GO" id="GO:0005654">
    <property type="term" value="C:nucleoplasm"/>
    <property type="evidence" value="ECO:0000304"/>
    <property type="project" value="Reactome"/>
</dbReference>
<dbReference type="GO" id="GO:0005634">
    <property type="term" value="C:nucleus"/>
    <property type="evidence" value="ECO:0000314"/>
    <property type="project" value="UniProtKB"/>
</dbReference>
<dbReference type="GO" id="GO:0032991">
    <property type="term" value="C:protein-containing complex"/>
    <property type="evidence" value="ECO:0000353"/>
    <property type="project" value="UniProtKB"/>
</dbReference>
<dbReference type="GO" id="GO:0005667">
    <property type="term" value="C:transcription regulator complex"/>
    <property type="evidence" value="ECO:0000314"/>
    <property type="project" value="MGI"/>
</dbReference>
<dbReference type="GO" id="GO:0003682">
    <property type="term" value="F:chromatin binding"/>
    <property type="evidence" value="ECO:0000314"/>
    <property type="project" value="MGI"/>
</dbReference>
<dbReference type="GO" id="GO:0003677">
    <property type="term" value="F:DNA binding"/>
    <property type="evidence" value="ECO:0000314"/>
    <property type="project" value="MGI"/>
</dbReference>
<dbReference type="GO" id="GO:0000981">
    <property type="term" value="F:DNA-binding transcription factor activity, RNA polymerase II-specific"/>
    <property type="evidence" value="ECO:0000314"/>
    <property type="project" value="MGI"/>
</dbReference>
<dbReference type="GO" id="GO:0070888">
    <property type="term" value="F:E-box binding"/>
    <property type="evidence" value="ECO:0000314"/>
    <property type="project" value="MGI"/>
</dbReference>
<dbReference type="GO" id="GO:0042826">
    <property type="term" value="F:histone deacetylase binding"/>
    <property type="evidence" value="ECO:0007669"/>
    <property type="project" value="Ensembl"/>
</dbReference>
<dbReference type="GO" id="GO:0046983">
    <property type="term" value="F:protein dimerization activity"/>
    <property type="evidence" value="ECO:0007669"/>
    <property type="project" value="InterPro"/>
</dbReference>
<dbReference type="GO" id="GO:0000978">
    <property type="term" value="F:RNA polymerase II cis-regulatory region sequence-specific DNA binding"/>
    <property type="evidence" value="ECO:0000314"/>
    <property type="project" value="MGI"/>
</dbReference>
<dbReference type="GO" id="GO:0061629">
    <property type="term" value="F:RNA polymerase II-specific DNA-binding transcription factor binding"/>
    <property type="evidence" value="ECO:0007669"/>
    <property type="project" value="Ensembl"/>
</dbReference>
<dbReference type="GO" id="GO:0000976">
    <property type="term" value="F:transcription cis-regulatory region binding"/>
    <property type="evidence" value="ECO:0000314"/>
    <property type="project" value="BHF-UCL"/>
</dbReference>
<dbReference type="GO" id="GO:0001525">
    <property type="term" value="P:angiogenesis"/>
    <property type="evidence" value="ECO:0000315"/>
    <property type="project" value="MGI"/>
</dbReference>
<dbReference type="GO" id="GO:0060018">
    <property type="term" value="P:astrocyte fate commitment"/>
    <property type="evidence" value="ECO:0000315"/>
    <property type="project" value="MGI"/>
</dbReference>
<dbReference type="GO" id="GO:0030221">
    <property type="term" value="P:basophil differentiation"/>
    <property type="evidence" value="ECO:0007669"/>
    <property type="project" value="Ensembl"/>
</dbReference>
<dbReference type="GO" id="GO:0045165">
    <property type="term" value="P:cell fate commitment"/>
    <property type="evidence" value="ECO:0000315"/>
    <property type="project" value="MGI"/>
</dbReference>
<dbReference type="GO" id="GO:0021953">
    <property type="term" value="P:central nervous system neuron differentiation"/>
    <property type="evidence" value="ECO:0000315"/>
    <property type="project" value="MGI"/>
</dbReference>
<dbReference type="GO" id="GO:0060216">
    <property type="term" value="P:definitive hemopoiesis"/>
    <property type="evidence" value="ECO:0000315"/>
    <property type="project" value="MGI"/>
</dbReference>
<dbReference type="GO" id="GO:0035162">
    <property type="term" value="P:embryonic hemopoiesis"/>
    <property type="evidence" value="ECO:0000315"/>
    <property type="project" value="UniProtKB"/>
</dbReference>
<dbReference type="GO" id="GO:0030218">
    <property type="term" value="P:erythrocyte differentiation"/>
    <property type="evidence" value="ECO:0000314"/>
    <property type="project" value="MGI"/>
</dbReference>
<dbReference type="GO" id="GO:0043249">
    <property type="term" value="P:erythrocyte maturation"/>
    <property type="evidence" value="ECO:0000315"/>
    <property type="project" value="MGI"/>
</dbReference>
<dbReference type="GO" id="GO:0048699">
    <property type="term" value="P:generation of neurons"/>
    <property type="evidence" value="ECO:0000315"/>
    <property type="project" value="MGI"/>
</dbReference>
<dbReference type="GO" id="GO:0060217">
    <property type="term" value="P:hemangioblast cell differentiation"/>
    <property type="evidence" value="ECO:0000315"/>
    <property type="project" value="MGI"/>
</dbReference>
<dbReference type="GO" id="GO:0060218">
    <property type="term" value="P:hematopoietic stem cell differentiation"/>
    <property type="evidence" value="ECO:0000315"/>
    <property type="project" value="MGI"/>
</dbReference>
<dbReference type="GO" id="GO:0030097">
    <property type="term" value="P:hemopoiesis"/>
    <property type="evidence" value="ECO:0000314"/>
    <property type="project" value="MGI"/>
</dbReference>
<dbReference type="GO" id="GO:0007626">
    <property type="term" value="P:locomotory behavior"/>
    <property type="evidence" value="ECO:0000315"/>
    <property type="project" value="MGI"/>
</dbReference>
<dbReference type="GO" id="GO:0035855">
    <property type="term" value="P:megakaryocyte development"/>
    <property type="evidence" value="ECO:0000315"/>
    <property type="project" value="MGI"/>
</dbReference>
<dbReference type="GO" id="GO:0030219">
    <property type="term" value="P:megakaryocyte differentiation"/>
    <property type="evidence" value="ECO:0000315"/>
    <property type="project" value="MGI"/>
</dbReference>
<dbReference type="GO" id="GO:0030099">
    <property type="term" value="P:myeloid cell differentiation"/>
    <property type="evidence" value="ECO:0000314"/>
    <property type="project" value="MGI"/>
</dbReference>
<dbReference type="GO" id="GO:0000122">
    <property type="term" value="P:negative regulation of transcription by RNA polymerase II"/>
    <property type="evidence" value="ECO:0000316"/>
    <property type="project" value="MGI"/>
</dbReference>
<dbReference type="GO" id="GO:0030220">
    <property type="term" value="P:platelet formation"/>
    <property type="evidence" value="ECO:0000315"/>
    <property type="project" value="MGI"/>
</dbReference>
<dbReference type="GO" id="GO:0051781">
    <property type="term" value="P:positive regulation of cell division"/>
    <property type="evidence" value="ECO:0007669"/>
    <property type="project" value="Ensembl"/>
</dbReference>
<dbReference type="GO" id="GO:1905269">
    <property type="term" value="P:positive regulation of chromatin organization"/>
    <property type="evidence" value="ECO:0007669"/>
    <property type="project" value="Ensembl"/>
</dbReference>
<dbReference type="GO" id="GO:0045893">
    <property type="term" value="P:positive regulation of DNA-templated transcription"/>
    <property type="evidence" value="ECO:0000250"/>
    <property type="project" value="UniProtKB"/>
</dbReference>
<dbReference type="GO" id="GO:0045648">
    <property type="term" value="P:positive regulation of erythrocyte differentiation"/>
    <property type="evidence" value="ECO:0000314"/>
    <property type="project" value="BHF-UCL"/>
</dbReference>
<dbReference type="GO" id="GO:0045931">
    <property type="term" value="P:positive regulation of mitotic cell cycle"/>
    <property type="evidence" value="ECO:0007669"/>
    <property type="project" value="Ensembl"/>
</dbReference>
<dbReference type="GO" id="GO:0031334">
    <property type="term" value="P:positive regulation of protein-containing complex assembly"/>
    <property type="evidence" value="ECO:0007669"/>
    <property type="project" value="Ensembl"/>
</dbReference>
<dbReference type="GO" id="GO:0045944">
    <property type="term" value="P:positive regulation of transcription by RNA polymerase II"/>
    <property type="evidence" value="ECO:0000316"/>
    <property type="project" value="MGI"/>
</dbReference>
<dbReference type="GO" id="GO:0042127">
    <property type="term" value="P:regulation of cell population proliferation"/>
    <property type="evidence" value="ECO:0000315"/>
    <property type="project" value="MGI"/>
</dbReference>
<dbReference type="GO" id="GO:0060375">
    <property type="term" value="P:regulation of mast cell differentiation"/>
    <property type="evidence" value="ECO:0000315"/>
    <property type="project" value="MGI"/>
</dbReference>
<dbReference type="GO" id="GO:0045637">
    <property type="term" value="P:regulation of myeloid cell differentiation"/>
    <property type="evidence" value="ECO:0000315"/>
    <property type="project" value="MGI"/>
</dbReference>
<dbReference type="GO" id="GO:1904672">
    <property type="term" value="P:regulation of somatic stem cell population maintenance"/>
    <property type="evidence" value="ECO:0000315"/>
    <property type="project" value="MGI"/>
</dbReference>
<dbReference type="GO" id="GO:0006357">
    <property type="term" value="P:regulation of transcription by RNA polymerase II"/>
    <property type="evidence" value="ECO:0000314"/>
    <property type="project" value="BHF-UCL"/>
</dbReference>
<dbReference type="GO" id="GO:0021527">
    <property type="term" value="P:spinal cord association neuron differentiation"/>
    <property type="evidence" value="ECO:0000316"/>
    <property type="project" value="MGI"/>
</dbReference>
<dbReference type="GO" id="GO:0006366">
    <property type="term" value="P:transcription by RNA polymerase II"/>
    <property type="evidence" value="ECO:0000314"/>
    <property type="project" value="MGI"/>
</dbReference>
<dbReference type="CDD" id="cd19706">
    <property type="entry name" value="bHLH_TS_TAL1"/>
    <property type="match status" value="1"/>
</dbReference>
<dbReference type="FunFam" id="4.10.280.10:FF:000015">
    <property type="entry name" value="T-cell acute lymphocytic leukemia 1"/>
    <property type="match status" value="1"/>
</dbReference>
<dbReference type="Gene3D" id="4.10.280.10">
    <property type="entry name" value="Helix-loop-helix DNA-binding domain"/>
    <property type="match status" value="1"/>
</dbReference>
<dbReference type="InterPro" id="IPR011598">
    <property type="entry name" value="bHLH_dom"/>
</dbReference>
<dbReference type="InterPro" id="IPR036638">
    <property type="entry name" value="HLH_DNA-bd_sf"/>
</dbReference>
<dbReference type="InterPro" id="IPR040238">
    <property type="entry name" value="TAL-like"/>
</dbReference>
<dbReference type="PANTHER" id="PTHR13864:SF16">
    <property type="entry name" value="T-CELL ACUTE LYMPHOCYTIC LEUKEMIA PROTEIN 1"/>
    <property type="match status" value="1"/>
</dbReference>
<dbReference type="PANTHER" id="PTHR13864">
    <property type="entry name" value="T-CELL ACUTE LYMPHOCYTIC LEUKEMIA/STEM CELL LEUKEMIA-RELATED"/>
    <property type="match status" value="1"/>
</dbReference>
<dbReference type="Pfam" id="PF00010">
    <property type="entry name" value="HLH"/>
    <property type="match status" value="1"/>
</dbReference>
<dbReference type="SMART" id="SM00353">
    <property type="entry name" value="HLH"/>
    <property type="match status" value="1"/>
</dbReference>
<dbReference type="SUPFAM" id="SSF47459">
    <property type="entry name" value="HLH, helix-loop-helix DNA-binding domain"/>
    <property type="match status" value="1"/>
</dbReference>
<dbReference type="PROSITE" id="PS50888">
    <property type="entry name" value="BHLH"/>
    <property type="match status" value="1"/>
</dbReference>
<organism>
    <name type="scientific">Mus musculus</name>
    <name type="common">Mouse</name>
    <dbReference type="NCBI Taxonomy" id="10090"/>
    <lineage>
        <taxon>Eukaryota</taxon>
        <taxon>Metazoa</taxon>
        <taxon>Chordata</taxon>
        <taxon>Craniata</taxon>
        <taxon>Vertebrata</taxon>
        <taxon>Euteleostomi</taxon>
        <taxon>Mammalia</taxon>
        <taxon>Eutheria</taxon>
        <taxon>Euarchontoglires</taxon>
        <taxon>Glires</taxon>
        <taxon>Rodentia</taxon>
        <taxon>Myomorpha</taxon>
        <taxon>Muroidea</taxon>
        <taxon>Muridae</taxon>
        <taxon>Murinae</taxon>
        <taxon>Mus</taxon>
        <taxon>Mus</taxon>
    </lineage>
</organism>
<keyword id="KW-0160">Chromosomal rearrangement</keyword>
<keyword id="KW-0217">Developmental protein</keyword>
<keyword id="KW-0221">Differentiation</keyword>
<keyword id="KW-0238">DNA-binding</keyword>
<keyword id="KW-0539">Nucleus</keyword>
<keyword id="KW-0597">Phosphoprotein</keyword>
<keyword id="KW-0656">Proto-oncogene</keyword>
<keyword id="KW-1185">Reference proteome</keyword>
<keyword id="KW-0804">Transcription</keyword>
<keyword id="KW-0805">Transcription regulation</keyword>
<keyword id="KW-0832">Ubl conjugation</keyword>
<evidence type="ECO:0000250" key="1">
    <source>
        <dbReference type="UniProtKB" id="P17542"/>
    </source>
</evidence>
<evidence type="ECO:0000255" key="2">
    <source>
        <dbReference type="PROSITE-ProRule" id="PRU00981"/>
    </source>
</evidence>
<evidence type="ECO:0000256" key="3">
    <source>
        <dbReference type="SAM" id="MobiDB-lite"/>
    </source>
</evidence>
<evidence type="ECO:0000269" key="4">
    <source>
    </source>
</evidence>
<evidence type="ECO:0000269" key="5">
    <source>
    </source>
</evidence>
<evidence type="ECO:0000269" key="6">
    <source>
    </source>
</evidence>
<evidence type="ECO:0007744" key="7">
    <source>
    </source>
</evidence>
<protein>
    <recommendedName>
        <fullName>T-cell acute lymphocytic leukemia protein 1 homolog</fullName>
        <shortName>TAL-1</shortName>
    </recommendedName>
    <alternativeName>
        <fullName>Stem cell protein</fullName>
    </alternativeName>
</protein>
<gene>
    <name type="primary">Tal1</name>
    <name type="synonym">Scl</name>
    <name type="synonym">Tal-1</name>
</gene>
<reference key="1">
    <citation type="journal article" date="1991" name="Proc. Natl. Acad. Sci. U.S.A.">
        <title>Molecular cloning and chromosomal localization of the murine homolog of the human helix-loop-helix gene SCL.</title>
        <authorList>
            <person name="Begley C.G."/>
            <person name="Visvader J."/>
            <person name="Green A.R."/>
            <person name="Aplan P.D."/>
            <person name="Metcalf D."/>
            <person name="Kirsch I.R."/>
            <person name="Gough N.M."/>
        </authorList>
    </citation>
    <scope>NUCLEOTIDE SEQUENCE [MRNA]</scope>
    <source>
        <tissue>Bone marrow macrophage</tissue>
    </source>
</reference>
<reference key="2">
    <citation type="journal article" date="2004" name="Genome Res.">
        <title>The status, quality, and expansion of the NIH full-length cDNA project: the Mammalian Gene Collection (MGC).</title>
        <authorList>
            <consortium name="The MGC Project Team"/>
        </authorList>
    </citation>
    <scope>NUCLEOTIDE SEQUENCE [LARGE SCALE MRNA]</scope>
    <source>
        <strain>C57BL/6J</strain>
        <tissue>Brain</tissue>
    </source>
</reference>
<reference key="3">
    <citation type="journal article" date="1997" name="Proc. Natl. Acad. Sci. U.S.A.">
        <title>The LIM-domain binding protein Ldb1 and its partner LMO2 act as negative regulators of erythroid differentiation.</title>
        <authorList>
            <person name="Visvader J.E."/>
            <person name="Mao X."/>
            <person name="Fujiwara Y."/>
            <person name="Hahm K."/>
            <person name="Orkin S.H."/>
        </authorList>
    </citation>
    <scope>FUNCTION</scope>
    <scope>INTERACTION WITH LMO2</scope>
    <scope>IDENTIFICATION IN A COMPLEX WITH LDB1 AND LMO2</scope>
    <scope>SUBCELLULAR LOCATION</scope>
</reference>
<reference key="4">
    <citation type="journal article" date="2002" name="J. Biol. Chem.">
        <title>Phosphorylation by mitogen-activated protein kinase mediates the hypoxia-induced turnover of the TAL1/SCL transcription factor in endothelial cells.</title>
        <authorList>
            <person name="Tang T."/>
            <person name="Arbiser J.L."/>
            <person name="Brandt S.J."/>
        </authorList>
    </citation>
    <scope>PHOSPHORYLATION AT SER-122</scope>
    <scope>MUTAGENESIS OF SER-122</scope>
    <scope>UBIQUITINATION</scope>
</reference>
<reference key="5">
    <citation type="journal article" date="2006" name="EMBO J.">
        <title>ETO2 coordinates cellular proliferation and differentiation during erythropoiesis.</title>
        <authorList>
            <person name="Goardon N."/>
            <person name="Lambert J.A."/>
            <person name="Rodriguez P."/>
            <person name="Nissaire P."/>
            <person name="Herblot S."/>
            <person name="Thibault P."/>
            <person name="Dumenil D."/>
            <person name="Strouboulis J."/>
            <person name="Romeo P.-H."/>
            <person name="Hoang T."/>
        </authorList>
    </citation>
    <scope>INTERACTION WITH CBFA2T3</scope>
</reference>
<reference key="6">
    <citation type="journal article" date="2010" name="Cell">
        <title>A tissue-specific atlas of mouse protein phosphorylation and expression.</title>
        <authorList>
            <person name="Huttlin E.L."/>
            <person name="Jedrychowski M.P."/>
            <person name="Elias J.E."/>
            <person name="Goswami T."/>
            <person name="Rad R."/>
            <person name="Beausoleil S.A."/>
            <person name="Villen J."/>
            <person name="Haas W."/>
            <person name="Sowa M.E."/>
            <person name="Gygi S.P."/>
        </authorList>
    </citation>
    <scope>PHOSPHORYLATION [LARGE SCALE ANALYSIS] AT SER-172</scope>
    <scope>IDENTIFICATION BY MASS SPECTROMETRY [LARGE SCALE ANALYSIS]</scope>
    <source>
        <tissue>Spleen</tissue>
    </source>
</reference>
<reference key="7">
    <citation type="journal article" date="2013" name="J. Exp. Med.">
        <title>Strawberry notch homologue 2 regulates osteoclast fusion by enhancing the expression of DC-STAMP.</title>
        <authorList>
            <person name="Maruyama K."/>
            <person name="Uematsu S."/>
            <person name="Kondo T."/>
            <person name="Takeuchi O."/>
            <person name="Martino M.M."/>
            <person name="Kawasaki T."/>
            <person name="Akira S."/>
        </authorList>
    </citation>
    <scope>INTERACTION WITH SBNO2</scope>
</reference>
<feature type="chain" id="PRO_0000127455" description="T-cell acute lymphocytic leukemia protein 1 homolog">
    <location>
        <begin position="1"/>
        <end position="329"/>
    </location>
</feature>
<feature type="domain" description="bHLH" evidence="2">
    <location>
        <begin position="187"/>
        <end position="239"/>
    </location>
</feature>
<feature type="region of interest" description="Disordered" evidence="3">
    <location>
        <begin position="1"/>
        <end position="28"/>
    </location>
</feature>
<feature type="region of interest" description="Disordered" evidence="3">
    <location>
        <begin position="40"/>
        <end position="78"/>
    </location>
</feature>
<feature type="region of interest" description="Disordered" evidence="3">
    <location>
        <begin position="91"/>
        <end position="125"/>
    </location>
</feature>
<feature type="region of interest" description="Disordered" evidence="3">
    <location>
        <begin position="247"/>
        <end position="329"/>
    </location>
</feature>
<feature type="compositionally biased region" description="Gly residues" evidence="3">
    <location>
        <begin position="58"/>
        <end position="70"/>
    </location>
</feature>
<feature type="compositionally biased region" description="Pro residues" evidence="3">
    <location>
        <begin position="96"/>
        <end position="106"/>
    </location>
</feature>
<feature type="compositionally biased region" description="Gly residues" evidence="3">
    <location>
        <begin position="263"/>
        <end position="273"/>
    </location>
</feature>
<feature type="compositionally biased region" description="Low complexity" evidence="3">
    <location>
        <begin position="317"/>
        <end position="329"/>
    </location>
</feature>
<feature type="modified residue" description="Phosphoserine" evidence="1">
    <location>
        <position position="12"/>
    </location>
</feature>
<feature type="modified residue" description="Phosphoserine; by MAPK" evidence="4">
    <location>
        <position position="122"/>
    </location>
</feature>
<feature type="modified residue" description="Phosphoserine" evidence="7">
    <location>
        <position position="172"/>
    </location>
</feature>
<feature type="mutagenesis site" description="Remains stable, even in the face of severe hypoxia." evidence="4">
    <original>S</original>
    <variation>A</variation>
    <location>
        <position position="122"/>
    </location>
</feature>
<sequence>MTERPPSEAARSDPQLEGQDAAEARMAPPHLVLLNGVAKETSRAAPAEPPVIELGARSGAGGGPASGGGAARDLKGRDAVAAEARLRVPTTELCRPPGPAPAPAPASAPAELPGDGRMVQLSPPALAAPAGPGRALLYSLSQPLASLGSGFFGEPDAFPMFTNNNRVKRRPSPYEMEISDGPHTKVVRRIFTNSRERWRQQNVNGAFAELRKLIPTHPPDKKLSKNEILRLAMKYINFLAKLLNDQEEEGTQRAKPGKDPVVGAGGGGAGGGIPPEDLLQDVLSPNSSCGSSLDGAASPDSYTEEPTPKHTSRSLHPALLPAADGAGPR</sequence>